<comment type="function">
    <text evidence="3 4 5 6 7 8 9 10 13 14">Cytochrome P450 monooxygenase; part of the gene cluster that mediates the biosynthesis of fumitremorgins, indole alkaloids that carry not only intriguing chemical structures, but also interesting biological and pharmacological activities (PubMed:19226505, PubMed:23649274). The biosynthesis of fumitremorgin-type alkaloids begins by condensation of the two amino acids L-tryptophan and L-proline to brevianamide F, catalyzed by the non-ribosomal peptide synthetase ftmA (PubMed:16755625). Brevianamide F is then prenylated by the prenyltransferase ftmPT1/ftmB in the presence of dimethylallyl diphosphate, resulting in the formation of tryprostatin B (PubMed:16000710, PubMed:21105662, PubMed:23090579). The three cytochrome P450 monooxygenases, ftmP450-1/ftmC, ftmP450-2/ftmE and ftmP450-3/FtmG, are responsible for the conversion of tryprostatin B to 6-hydroxytryprostatin B, tryprostatin A to fumitremorgin C and fumitremorgin C to 12,13-dihydroxyfumitremorgin C, respectively (PubMed:19226505). The putative methyltransferase ftmMT/ftmD is expected for the conversion of 6-hydroxytryprostatin B to tryprostatin A (Probable). FtmPT2/FtmH catalyzes the prenylation of 12,13-dihydroxyfumitre-morgin C in the presence of dimethylallyl diphosphate, resulting in the formation of fumitremorgin B (PubMed:18683158). Fumitremorgin B is further converted to verruculogen by ftmOx1/ftmF via the insertion of an endoperoxide bond between the two prenyl moieties (PubMed:19763315). In some fungal species, verruculogen is further converted to fumitremorgin A, but the enzymes involved in this step have not been identified yet (Probable).</text>
</comment>
<comment type="catalytic activity">
    <reaction evidence="6">
        <text>fumitremorgin C + 2 reduced [NADPH--hemoprotein reductase] + 2 O2 = 12alpha,13alpha-dihydroxyfumitremorgin C + 2 oxidized [NADPH--hemoprotein reductase] + 2 H2O + 2 H(+)</text>
        <dbReference type="Rhea" id="RHEA:35967"/>
        <dbReference type="Rhea" id="RHEA-COMP:11964"/>
        <dbReference type="Rhea" id="RHEA-COMP:11965"/>
        <dbReference type="ChEBI" id="CHEBI:15377"/>
        <dbReference type="ChEBI" id="CHEBI:15378"/>
        <dbReference type="ChEBI" id="CHEBI:15379"/>
        <dbReference type="ChEBI" id="CHEBI:57618"/>
        <dbReference type="ChEBI" id="CHEBI:58210"/>
        <dbReference type="ChEBI" id="CHEBI:72763"/>
        <dbReference type="ChEBI" id="CHEBI:72764"/>
        <dbReference type="EC" id="1.14.14.119"/>
    </reaction>
</comment>
<comment type="cofactor">
    <cofactor evidence="1">
        <name>heme</name>
        <dbReference type="ChEBI" id="CHEBI:30413"/>
    </cofactor>
</comment>
<comment type="pathway">
    <text evidence="6 10">Mycotoxin biosynthesis.</text>
</comment>
<comment type="subcellular location">
    <subcellularLocation>
        <location evidence="2">Membrane</location>
        <topology evidence="2">Single-pass membrane protein</topology>
    </subcellularLocation>
</comment>
<comment type="similarity">
    <text evidence="13">Belongs to the cytochrome P450 family.</text>
</comment>
<comment type="caution">
    <text evidence="15">In contrast to other A.fumigatus strains, strain ATCC MYA-4609 does not produce indole alkaloids such as fumitremorgins and verruculogen. While the biosynthetic pathway is complete, a variation in the O-methyltransferase FtmD (AC Q4WAW6) abolishes production of the tryprostatin A intermediate (PubMed:23649274).</text>
</comment>
<proteinExistence type="evidence at protein level"/>
<gene>
    <name evidence="11" type="primary">ftmP450-3</name>
    <name evidence="12" type="synonym">ftmG</name>
    <name type="ORF">AFUA_8G00240</name>
</gene>
<sequence length="490" mass="55052">METLDAIQLPYLGVVGASLIVILGIILLFPLGSDPFITINQHPRDLFQTKAKQQFEYNAAALLNEGLQTGHSAFRLVTNMVTYLILKDQYAEEIKNDSRFGAHEAVDPVLLVDLPGLESMFQGSLHNQVPPMAVRALNKELVHLTPSLSEEAMNCLQTRWTDSTEWHGVSIPETVLALIAQMTTRALLGPELCRNPEWLDIAKSFTTNRAIAVAAVQSWPSFLQPVIHWFLPPCRALRRQIQCARNIILPALERERRAYCSDQPTKREFSNLVFIDQYAKGARYDATMAQLRIIAVAFQTTSDLVEKVIARLCKHPELIEPLREEVVSVVGNHGLHRHSLRKLTLMESVMKETQRLEPAVIIGMFRLAKEKVTLKDGTVVPKGTNIAFANDLRFDPEMYLEPETFDGYRFQRMREDPAKIDLAPFTKTRMSHLAFGHGKHACPGRFLACDEAKLILCHILLNYDIRAVEGSPPELPGSWGNDVGEKTAGD</sequence>
<evidence type="ECO:0000250" key="1">
    <source>
        <dbReference type="UniProtKB" id="P04798"/>
    </source>
</evidence>
<evidence type="ECO:0000255" key="2"/>
<evidence type="ECO:0000269" key="3">
    <source>
    </source>
</evidence>
<evidence type="ECO:0000269" key="4">
    <source>
    </source>
</evidence>
<evidence type="ECO:0000269" key="5">
    <source>
    </source>
</evidence>
<evidence type="ECO:0000269" key="6">
    <source>
    </source>
</evidence>
<evidence type="ECO:0000269" key="7">
    <source>
    </source>
</evidence>
<evidence type="ECO:0000269" key="8">
    <source>
    </source>
</evidence>
<evidence type="ECO:0000269" key="9">
    <source>
    </source>
</evidence>
<evidence type="ECO:0000269" key="10">
    <source>
    </source>
</evidence>
<evidence type="ECO:0000303" key="11">
    <source>
    </source>
</evidence>
<evidence type="ECO:0000303" key="12">
    <source>
    </source>
</evidence>
<evidence type="ECO:0000305" key="13"/>
<evidence type="ECO:0000305" key="14">
    <source>
    </source>
</evidence>
<evidence type="ECO:0000305" key="15">
    <source>
    </source>
</evidence>
<reference key="1">
    <citation type="journal article" date="2005" name="Nature">
        <title>Genomic sequence of the pathogenic and allergenic filamentous fungus Aspergillus fumigatus.</title>
        <authorList>
            <person name="Nierman W.C."/>
            <person name="Pain A."/>
            <person name="Anderson M.J."/>
            <person name="Wortman J.R."/>
            <person name="Kim H.S."/>
            <person name="Arroyo J."/>
            <person name="Berriman M."/>
            <person name="Abe K."/>
            <person name="Archer D.B."/>
            <person name="Bermejo C."/>
            <person name="Bennett J.W."/>
            <person name="Bowyer P."/>
            <person name="Chen D."/>
            <person name="Collins M."/>
            <person name="Coulsen R."/>
            <person name="Davies R."/>
            <person name="Dyer P.S."/>
            <person name="Farman M.L."/>
            <person name="Fedorova N."/>
            <person name="Fedorova N.D."/>
            <person name="Feldblyum T.V."/>
            <person name="Fischer R."/>
            <person name="Fosker N."/>
            <person name="Fraser A."/>
            <person name="Garcia J.L."/>
            <person name="Garcia M.J."/>
            <person name="Goble A."/>
            <person name="Goldman G.H."/>
            <person name="Gomi K."/>
            <person name="Griffith-Jones S."/>
            <person name="Gwilliam R."/>
            <person name="Haas B.J."/>
            <person name="Haas H."/>
            <person name="Harris D.E."/>
            <person name="Horiuchi H."/>
            <person name="Huang J."/>
            <person name="Humphray S."/>
            <person name="Jimenez J."/>
            <person name="Keller N."/>
            <person name="Khouri H."/>
            <person name="Kitamoto K."/>
            <person name="Kobayashi T."/>
            <person name="Konzack S."/>
            <person name="Kulkarni R."/>
            <person name="Kumagai T."/>
            <person name="Lafton A."/>
            <person name="Latge J.-P."/>
            <person name="Li W."/>
            <person name="Lord A."/>
            <person name="Lu C."/>
            <person name="Majoros W.H."/>
            <person name="May G.S."/>
            <person name="Miller B.L."/>
            <person name="Mohamoud Y."/>
            <person name="Molina M."/>
            <person name="Monod M."/>
            <person name="Mouyna I."/>
            <person name="Mulligan S."/>
            <person name="Murphy L.D."/>
            <person name="O'Neil S."/>
            <person name="Paulsen I."/>
            <person name="Penalva M.A."/>
            <person name="Pertea M."/>
            <person name="Price C."/>
            <person name="Pritchard B.L."/>
            <person name="Quail M.A."/>
            <person name="Rabbinowitsch E."/>
            <person name="Rawlins N."/>
            <person name="Rajandream M.A."/>
            <person name="Reichard U."/>
            <person name="Renauld H."/>
            <person name="Robson G.D."/>
            <person name="Rodriguez de Cordoba S."/>
            <person name="Rodriguez-Pena J.M."/>
            <person name="Ronning C.M."/>
            <person name="Rutter S."/>
            <person name="Salzberg S.L."/>
            <person name="Sanchez M."/>
            <person name="Sanchez-Ferrero J.C."/>
            <person name="Saunders D."/>
            <person name="Seeger K."/>
            <person name="Squares R."/>
            <person name="Squares S."/>
            <person name="Takeuchi M."/>
            <person name="Tekaia F."/>
            <person name="Turner G."/>
            <person name="Vazquez de Aldana C.R."/>
            <person name="Weidman J."/>
            <person name="White O."/>
            <person name="Woodward J.R."/>
            <person name="Yu J.-H."/>
            <person name="Fraser C.M."/>
            <person name="Galagan J.E."/>
            <person name="Asai K."/>
            <person name="Machida M."/>
            <person name="Hall N."/>
            <person name="Barrell B.G."/>
            <person name="Denning D.W."/>
        </authorList>
    </citation>
    <scope>NUCLEOTIDE SEQUENCE [LARGE SCALE GENOMIC DNA]</scope>
    <source>
        <strain>ATCC MYA-4609 / CBS 101355 / FGSC A1100 / Af293</strain>
    </source>
</reference>
<reference key="2">
    <citation type="journal article" date="2005" name="Microbiology">
        <title>Overproduction, purification and characterization of FtmPT1, a brevianamide F prenyltransferase from Aspergillus fumigatus.</title>
        <authorList>
            <person name="Grundmann A."/>
            <person name="Li S.M."/>
        </authorList>
    </citation>
    <scope>FUNCTION</scope>
</reference>
<reference key="3">
    <citation type="journal article" date="2006" name="ChemBioChem">
        <title>The fumitremorgin gene cluster of Aspergillus fumigatus: identification of a gene encoding brevianamide F synthetase.</title>
        <authorList>
            <person name="Maiya S."/>
            <person name="Grundmann A."/>
            <person name="Li S.M."/>
            <person name="Turner G."/>
        </authorList>
    </citation>
    <scope>FUNCTION</scope>
</reference>
<reference key="4">
    <citation type="journal article" date="2008" name="ChemBioChem">
        <title>FtmPT2, an N-prenyltransferase from Aspergillus fumigatus, catalyses the last step in the biosynthesis of fumitremorgin B.</title>
        <authorList>
            <person name="Grundmann A."/>
            <person name="Kuznetsova T."/>
            <person name="Afiyatullov S.S."/>
            <person name="Li S.M."/>
        </authorList>
    </citation>
    <scope>FUNCTION</scope>
</reference>
<reference key="5">
    <citation type="journal article" date="2009" name="ChemBioChem">
        <title>Identification of cytochrome P450s required for fumitremorgin biosynthesis in Aspergillus fumigatus.</title>
        <authorList>
            <person name="Kato N."/>
            <person name="Suzuki H."/>
            <person name="Takagi H."/>
            <person name="Asami Y."/>
            <person name="Kakeya H."/>
            <person name="Uramoto M."/>
            <person name="Usui T."/>
            <person name="Takahashi S."/>
            <person name="Sugimoto Y."/>
            <person name="Osada H."/>
        </authorList>
    </citation>
    <scope>FUNCTION</scope>
    <scope>CATALYTIC ACTIVITY</scope>
    <scope>PATHWAY</scope>
</reference>
<reference key="6">
    <citation type="journal article" date="2009" name="Org. Biomol. Chem.">
        <title>FtmOx1, a non-heme Fe(II) and alpha-ketoglutarate-dependent dioxygenase, catalyses the endoperoxide formation of verruculogen in Aspergillus fumigatus.</title>
        <authorList>
            <person name="Steffan N."/>
            <person name="Grundmann A."/>
            <person name="Afiyatullov S."/>
            <person name="Ruan H."/>
            <person name="Li S.M."/>
        </authorList>
    </citation>
    <scope>FUNCTION</scope>
</reference>
<reference key="7">
    <citation type="journal article" date="2010" name="J. Am. Chem. Soc.">
        <title>Structure-function analysis of an enzymatic prenyl transfer reaction identifies a reaction chamber with modifiable specificity.</title>
        <authorList>
            <person name="Jost M."/>
            <person name="Zocher G."/>
            <person name="Tarcz S."/>
            <person name="Matuschek M."/>
            <person name="Xie X."/>
            <person name="Li S.M."/>
            <person name="Stehle T."/>
        </authorList>
    </citation>
    <scope>FUNCTION</scope>
</reference>
<reference key="8">
    <citation type="journal article" date="2012" name="Org. Biomol. Chem.">
        <title>Breaking the regioselectivity of indole prenyltransferases: identification of regular C3-prenylated hexahydropyrrolo[2,3-b]indoles as side products of the regular C2-prenyltransferase FtmPT1.</title>
        <authorList>
            <person name="Wollinsky B."/>
            <person name="Ludwig L."/>
            <person name="Xie X."/>
            <person name="Li S.M."/>
        </authorList>
    </citation>
    <scope>FUNCTION</scope>
</reference>
<reference key="9">
    <citation type="journal article" date="2013" name="Biosci. Biotechnol. Biochem.">
        <title>A point mutation in ftmD blocks the fumitremorgin biosynthetic pathway in Aspergillus fumigatus strain Af293.</title>
        <authorList>
            <person name="Kato N."/>
            <person name="Suzuki H."/>
            <person name="Okumura H."/>
            <person name="Takahashi S."/>
            <person name="Osada H."/>
        </authorList>
    </citation>
    <scope>FUNCTION</scope>
    <scope>PATHWAY</scope>
    <source>
        <strain>ATCC MYA-4609 / CBS 101355 / FGSC A1100 / Af293</strain>
    </source>
</reference>
<keyword id="KW-0349">Heme</keyword>
<keyword id="KW-0408">Iron</keyword>
<keyword id="KW-0472">Membrane</keyword>
<keyword id="KW-0479">Metal-binding</keyword>
<keyword id="KW-0503">Monooxygenase</keyword>
<keyword id="KW-0560">Oxidoreductase</keyword>
<keyword id="KW-1185">Reference proteome</keyword>
<keyword id="KW-0812">Transmembrane</keyword>
<keyword id="KW-1133">Transmembrane helix</keyword>
<keyword id="KW-0843">Virulence</keyword>
<dbReference type="EC" id="1.14.14.119" evidence="6"/>
<dbReference type="EMBL" id="AAHF01000014">
    <property type="protein sequence ID" value="EAL85142.1"/>
    <property type="molecule type" value="Genomic_DNA"/>
</dbReference>
<dbReference type="RefSeq" id="XP_747180.1">
    <property type="nucleotide sequence ID" value="XM_742087.1"/>
</dbReference>
<dbReference type="SMR" id="Q4WAX0"/>
<dbReference type="STRING" id="330879.Q4WAX0"/>
<dbReference type="EnsemblFungi" id="EAL85142">
    <property type="protein sequence ID" value="EAL85142"/>
    <property type="gene ID" value="AFUA_8G00240"/>
</dbReference>
<dbReference type="GeneID" id="3504527"/>
<dbReference type="KEGG" id="afm:AFUA_8G00240"/>
<dbReference type="VEuPathDB" id="FungiDB:Afu8g00240"/>
<dbReference type="eggNOG" id="KOG0156">
    <property type="taxonomic scope" value="Eukaryota"/>
</dbReference>
<dbReference type="HOGENOM" id="CLU_022195_0_3_1"/>
<dbReference type="InParanoid" id="Q4WAX0"/>
<dbReference type="OMA" id="RICEHPE"/>
<dbReference type="OrthoDB" id="1844152at2759"/>
<dbReference type="Proteomes" id="UP000002530">
    <property type="component" value="Chromosome 8"/>
</dbReference>
<dbReference type="GO" id="GO:0016020">
    <property type="term" value="C:membrane"/>
    <property type="evidence" value="ECO:0007669"/>
    <property type="project" value="UniProtKB-SubCell"/>
</dbReference>
<dbReference type="GO" id="GO:0020037">
    <property type="term" value="F:heme binding"/>
    <property type="evidence" value="ECO:0007669"/>
    <property type="project" value="InterPro"/>
</dbReference>
<dbReference type="GO" id="GO:0005506">
    <property type="term" value="F:iron ion binding"/>
    <property type="evidence" value="ECO:0007669"/>
    <property type="project" value="InterPro"/>
</dbReference>
<dbReference type="GO" id="GO:0004497">
    <property type="term" value="F:monooxygenase activity"/>
    <property type="evidence" value="ECO:0007669"/>
    <property type="project" value="UniProtKB-KW"/>
</dbReference>
<dbReference type="GO" id="GO:0016705">
    <property type="term" value="F:oxidoreductase activity, acting on paired donors, with incorporation or reduction of molecular oxygen"/>
    <property type="evidence" value="ECO:0007669"/>
    <property type="project" value="InterPro"/>
</dbReference>
<dbReference type="GO" id="GO:1902181">
    <property type="term" value="P:verruculogen biosynthetic process"/>
    <property type="evidence" value="ECO:0000314"/>
    <property type="project" value="GO_Central"/>
</dbReference>
<dbReference type="CDD" id="cd11041">
    <property type="entry name" value="CYP503A1-like"/>
    <property type="match status" value="1"/>
</dbReference>
<dbReference type="Gene3D" id="1.10.630.10">
    <property type="entry name" value="Cytochrome P450"/>
    <property type="match status" value="1"/>
</dbReference>
<dbReference type="InterPro" id="IPR001128">
    <property type="entry name" value="Cyt_P450"/>
</dbReference>
<dbReference type="InterPro" id="IPR017972">
    <property type="entry name" value="Cyt_P450_CS"/>
</dbReference>
<dbReference type="InterPro" id="IPR002403">
    <property type="entry name" value="Cyt_P450_E_grp-IV"/>
</dbReference>
<dbReference type="InterPro" id="IPR036396">
    <property type="entry name" value="Cyt_P450_sf"/>
</dbReference>
<dbReference type="PANTHER" id="PTHR46206">
    <property type="entry name" value="CYTOCHROME P450"/>
    <property type="match status" value="1"/>
</dbReference>
<dbReference type="PANTHER" id="PTHR46206:SF3">
    <property type="entry name" value="P450, PUTATIVE (EUROFUNG)-RELATED"/>
    <property type="match status" value="1"/>
</dbReference>
<dbReference type="Pfam" id="PF00067">
    <property type="entry name" value="p450"/>
    <property type="match status" value="1"/>
</dbReference>
<dbReference type="PRINTS" id="PR00465">
    <property type="entry name" value="EP450IV"/>
</dbReference>
<dbReference type="PRINTS" id="PR00385">
    <property type="entry name" value="P450"/>
</dbReference>
<dbReference type="SUPFAM" id="SSF48264">
    <property type="entry name" value="Cytochrome P450"/>
    <property type="match status" value="1"/>
</dbReference>
<dbReference type="PROSITE" id="PS00086">
    <property type="entry name" value="CYTOCHROME_P450"/>
    <property type="match status" value="1"/>
</dbReference>
<protein>
    <recommendedName>
        <fullName evidence="11">Fumitremorgin C monooxygenase</fullName>
        <ecNumber evidence="6">1.14.14.119</ecNumber>
    </recommendedName>
    <alternativeName>
        <fullName evidence="11">Cytochrome P450 monooxygenase ftmP450-3</fullName>
    </alternativeName>
    <alternativeName>
        <fullName evidence="12">Fumitremorgin biosynthesis protein G</fullName>
    </alternativeName>
</protein>
<name>FTMG_ASPFU</name>
<accession>Q4WAX0</accession>
<feature type="chain" id="PRO_0000424124" description="Fumitremorgin C monooxygenase">
    <location>
        <begin position="1"/>
        <end position="490"/>
    </location>
</feature>
<feature type="transmembrane region" description="Helical" evidence="2">
    <location>
        <begin position="12"/>
        <end position="32"/>
    </location>
</feature>
<feature type="binding site" description="axial binding residue" evidence="1">
    <location>
        <position position="442"/>
    </location>
    <ligand>
        <name>heme</name>
        <dbReference type="ChEBI" id="CHEBI:30413"/>
    </ligand>
    <ligandPart>
        <name>Fe</name>
        <dbReference type="ChEBI" id="CHEBI:18248"/>
    </ligandPart>
</feature>
<organism>
    <name type="scientific">Aspergillus fumigatus (strain ATCC MYA-4609 / CBS 101355 / FGSC A1100 / Af293)</name>
    <name type="common">Neosartorya fumigata</name>
    <dbReference type="NCBI Taxonomy" id="330879"/>
    <lineage>
        <taxon>Eukaryota</taxon>
        <taxon>Fungi</taxon>
        <taxon>Dikarya</taxon>
        <taxon>Ascomycota</taxon>
        <taxon>Pezizomycotina</taxon>
        <taxon>Eurotiomycetes</taxon>
        <taxon>Eurotiomycetidae</taxon>
        <taxon>Eurotiales</taxon>
        <taxon>Aspergillaceae</taxon>
        <taxon>Aspergillus</taxon>
        <taxon>Aspergillus subgen. Fumigati</taxon>
    </lineage>
</organism>